<protein>
    <recommendedName>
        <fullName>Secretory carrier-associated membrane protein</fullName>
        <shortName>Secretory carrier membrane protein</shortName>
    </recommendedName>
</protein>
<name>SCAM_PEA</name>
<gene>
    <name type="primary">PSAM2</name>
</gene>
<feature type="chain" id="PRO_0000304912" description="Secretory carrier-associated membrane protein">
    <location>
        <begin position="1"/>
        <end position="289"/>
    </location>
</feature>
<feature type="topological domain" description="Cytoplasmic" evidence="2">
    <location>
        <begin position="1"/>
        <end position="123"/>
    </location>
</feature>
<feature type="transmembrane region" description="Helical" evidence="2">
    <location>
        <begin position="124"/>
        <end position="144"/>
    </location>
</feature>
<feature type="transmembrane region" description="Helical" evidence="2">
    <location>
        <begin position="156"/>
        <end position="176"/>
    </location>
</feature>
<feature type="transmembrane region" description="Helical" evidence="2">
    <location>
        <begin position="191"/>
        <end position="211"/>
    </location>
</feature>
<feature type="transmembrane region" description="Helical" evidence="2">
    <location>
        <begin position="239"/>
        <end position="259"/>
    </location>
</feature>
<feature type="topological domain" description="Cytoplasmic" evidence="2">
    <location>
        <begin position="260"/>
        <end position="289"/>
    </location>
</feature>
<feature type="region of interest" description="Disordered" evidence="3">
    <location>
        <begin position="1"/>
        <end position="65"/>
    </location>
</feature>
<feature type="coiled-coil region" evidence="2">
    <location>
        <begin position="59"/>
        <end position="98"/>
    </location>
</feature>
<feature type="compositionally biased region" description="Polar residues" evidence="3">
    <location>
        <begin position="16"/>
        <end position="31"/>
    </location>
</feature>
<sequence>MAGRYDPNPFDEEQVNPFSNPRSAASATNSRPAPLNPDRADYNYGFGPTVDIPLDTSTDGKKKERDLQAKEAELRKREQEVRRKEEAIARAGIVIEEKNWPPFFPIIHHDITNEIPIHLRTLQYVAFFSLLGLVLCLTWNVVSVTAAWIKGEGVKIWFLAIIYFIAGVPGAYALWYRPLYRAFRTDSAIKFGWFFMFYLLHIGFCILAAVAPPIVFKGKSLTGILSAIDVVGDYTLVGIFYFIGFGFFCLETLISIWVIQQVYMHFRGGGKTAEMKREAALGAMGAALR</sequence>
<accession>Q9ZTX0</accession>
<proteinExistence type="evidence at transcript level"/>
<evidence type="ECO:0000250" key="1"/>
<evidence type="ECO:0000255" key="2"/>
<evidence type="ECO:0000256" key="3">
    <source>
        <dbReference type="SAM" id="MobiDB-lite"/>
    </source>
</evidence>
<evidence type="ECO:0000269" key="4">
    <source ref="1"/>
</evidence>
<evidence type="ECO:0000305" key="5"/>
<dbReference type="EMBL" id="AF018093">
    <property type="protein sequence ID" value="AAC82326.1"/>
    <property type="molecule type" value="mRNA"/>
</dbReference>
<dbReference type="SMR" id="Q9ZTX0"/>
<dbReference type="GO" id="GO:0005886">
    <property type="term" value="C:plasma membrane"/>
    <property type="evidence" value="ECO:0007669"/>
    <property type="project" value="UniProtKB-SubCell"/>
</dbReference>
<dbReference type="GO" id="GO:0055038">
    <property type="term" value="C:recycling endosome membrane"/>
    <property type="evidence" value="ECO:0007669"/>
    <property type="project" value="TreeGrafter"/>
</dbReference>
<dbReference type="GO" id="GO:0032588">
    <property type="term" value="C:trans-Golgi network membrane"/>
    <property type="evidence" value="ECO:0007669"/>
    <property type="project" value="TreeGrafter"/>
</dbReference>
<dbReference type="GO" id="GO:0030658">
    <property type="term" value="C:transport vesicle membrane"/>
    <property type="evidence" value="ECO:0007669"/>
    <property type="project" value="UniProtKB-SubCell"/>
</dbReference>
<dbReference type="GO" id="GO:0015031">
    <property type="term" value="P:protein transport"/>
    <property type="evidence" value="ECO:0007669"/>
    <property type="project" value="InterPro"/>
</dbReference>
<dbReference type="InterPro" id="IPR007273">
    <property type="entry name" value="SCAMP"/>
</dbReference>
<dbReference type="PANTHER" id="PTHR10687:SF58">
    <property type="entry name" value="SECRETORY CARRIER-ASSOCIATED MEMBRANE PROTEIN"/>
    <property type="match status" value="1"/>
</dbReference>
<dbReference type="PANTHER" id="PTHR10687">
    <property type="entry name" value="SECRETORY CARRIER-ASSOCIATED MEMBRANE PROTEIN SCAMP"/>
    <property type="match status" value="1"/>
</dbReference>
<dbReference type="Pfam" id="PF04144">
    <property type="entry name" value="SCAMP"/>
    <property type="match status" value="1"/>
</dbReference>
<comment type="function">
    <text evidence="1">Probably involved in membrane trafficking.</text>
</comment>
<comment type="subcellular location">
    <subcellularLocation>
        <location evidence="1">Cell membrane</location>
        <topology evidence="1">Multi-pass membrane protein</topology>
    </subcellularLocation>
    <subcellularLocation>
        <location evidence="1">Cytoplasmic vesicle</location>
        <location evidence="1">Secretory vesicle membrane</location>
        <topology evidence="1">Multi-pass membrane protein</topology>
    </subcellularLocation>
</comment>
<comment type="induction">
    <text evidence="4">Up-regulated in early interactions with pathogenic fingi and down-regulated at late stages of mycorrhiza.</text>
</comment>
<comment type="similarity">
    <text evidence="5">Belongs to the SCAMP family.</text>
</comment>
<keyword id="KW-1003">Cell membrane</keyword>
<keyword id="KW-0175">Coiled coil</keyword>
<keyword id="KW-0968">Cytoplasmic vesicle</keyword>
<keyword id="KW-0472">Membrane</keyword>
<keyword id="KW-0812">Transmembrane</keyword>
<keyword id="KW-1133">Transmembrane helix</keyword>
<keyword id="KW-0813">Transport</keyword>
<organism>
    <name type="scientific">Pisum sativum</name>
    <name type="common">Garden pea</name>
    <name type="synonym">Lathyrus oleraceus</name>
    <dbReference type="NCBI Taxonomy" id="3888"/>
    <lineage>
        <taxon>Eukaryota</taxon>
        <taxon>Viridiplantae</taxon>
        <taxon>Streptophyta</taxon>
        <taxon>Embryophyta</taxon>
        <taxon>Tracheophyta</taxon>
        <taxon>Spermatophyta</taxon>
        <taxon>Magnoliopsida</taxon>
        <taxon>eudicotyledons</taxon>
        <taxon>Gunneridae</taxon>
        <taxon>Pentapetalae</taxon>
        <taxon>rosids</taxon>
        <taxon>fabids</taxon>
        <taxon>Fabales</taxon>
        <taxon>Fabaceae</taxon>
        <taxon>Papilionoideae</taxon>
        <taxon>50 kb inversion clade</taxon>
        <taxon>NPAAA clade</taxon>
        <taxon>Hologalegina</taxon>
        <taxon>IRL clade</taxon>
        <taxon>Fabeae</taxon>
        <taxon>Pisum</taxon>
    </lineage>
</organism>
<reference key="1">
    <citation type="journal article" date="1998" name="Physiol. Mol. Plant Pathol.">
        <title>Cloning and analysis of psam2, a gene from Pisum sativum L. regulated in symbiotic arbuscular mycorrhiza and pathogenic root-fungus interactions.</title>
        <authorList>
            <person name="Krajinski F."/>
            <person name="Martin-Laurent F."/>
            <person name="Gianinazzi S."/>
            <person name="Gianinazzi-Pearson V."/>
            <person name="Franken P."/>
        </authorList>
        <dbReference type="AGRICOLA" id="IND21960597"/>
    </citation>
    <scope>NUCLEOTIDE SEQUENCE [MRNA]</scope>
    <scope>INDUCTION</scope>
    <source>
        <tissue>Root</tissue>
    </source>
</reference>